<protein>
    <recommendedName>
        <fullName evidence="9">Adenosine 5'-monophosphoramidase HINT1</fullName>
        <ecNumber evidence="1">3.9.1.-</ecNumber>
    </recommendedName>
    <alternativeName>
        <fullName evidence="1">Desumoylating isopeptidase HINT1</fullName>
        <ecNumber evidence="1">3.4.22.-</ecNumber>
    </alternativeName>
    <alternativeName>
        <fullName>Histidine triad nucleotide-binding protein 1</fullName>
    </alternativeName>
    <alternativeName>
        <fullName>P13.7</fullName>
    </alternativeName>
</protein>
<gene>
    <name type="primary">HINT1</name>
    <name type="synonym">HINT</name>
</gene>
<sequence>MADEIAKAQVARPGGDTIFGKIIRKEIPAKIIFEDDQCLAFHDISPQAPTHFLVIPKKHISQISAAEDADESLLGHLMIVGKKCAADLGLKKGYRMVVNEGSDGGQSVYHVHLHVLGGRQMNWPPG</sequence>
<dbReference type="EC" id="3.9.1.-" evidence="1"/>
<dbReference type="EC" id="3.4.22.-" evidence="1"/>
<dbReference type="EMBL" id="Y11175">
    <property type="protein sequence ID" value="CAA72061.1"/>
    <property type="molecule type" value="mRNA"/>
</dbReference>
<dbReference type="RefSeq" id="NP_001076092.1">
    <property type="nucleotide sequence ID" value="NM_001082623.1"/>
</dbReference>
<dbReference type="PDB" id="1RZY">
    <property type="method" value="X-ray"/>
    <property type="resolution" value="1.80 A"/>
    <property type="chains" value="A=2-126"/>
</dbReference>
<dbReference type="PDB" id="3O1C">
    <property type="method" value="X-ray"/>
    <property type="resolution" value="1.08 A"/>
    <property type="chains" value="A=1-126"/>
</dbReference>
<dbReference type="PDB" id="3O1X">
    <property type="method" value="X-ray"/>
    <property type="resolution" value="1.08 A"/>
    <property type="chains" value="A=1-126"/>
</dbReference>
<dbReference type="PDB" id="3O1Z">
    <property type="method" value="X-ray"/>
    <property type="resolution" value="1.30 A"/>
    <property type="chains" value="A=1-126"/>
</dbReference>
<dbReference type="PDB" id="3QGZ">
    <property type="method" value="X-ray"/>
    <property type="resolution" value="1.10 A"/>
    <property type="chains" value="A=1-126"/>
</dbReference>
<dbReference type="PDB" id="3RHN">
    <property type="method" value="X-ray"/>
    <property type="resolution" value="2.10 A"/>
    <property type="chains" value="A=12-126"/>
</dbReference>
<dbReference type="PDB" id="4RHN">
    <property type="method" value="X-ray"/>
    <property type="resolution" value="1.90 A"/>
    <property type="chains" value="A=12-126"/>
</dbReference>
<dbReference type="PDB" id="5RHN">
    <property type="method" value="X-ray"/>
    <property type="resolution" value="2.31 A"/>
    <property type="chains" value="A=12-126"/>
</dbReference>
<dbReference type="PDB" id="6RHN">
    <property type="method" value="X-ray"/>
    <property type="resolution" value="2.15 A"/>
    <property type="chains" value="A=12-126"/>
</dbReference>
<dbReference type="PDBsum" id="1RZY"/>
<dbReference type="PDBsum" id="3O1C"/>
<dbReference type="PDBsum" id="3O1X"/>
<dbReference type="PDBsum" id="3O1Z"/>
<dbReference type="PDBsum" id="3QGZ"/>
<dbReference type="PDBsum" id="3RHN"/>
<dbReference type="PDBsum" id="4RHN"/>
<dbReference type="PDBsum" id="5RHN"/>
<dbReference type="PDBsum" id="6RHN"/>
<dbReference type="SMR" id="P80912"/>
<dbReference type="FunCoup" id="P80912">
    <property type="interactions" value="1121"/>
</dbReference>
<dbReference type="STRING" id="9986.ENSOCUP00000005709"/>
<dbReference type="ChEMBL" id="CHEMBL3232701"/>
<dbReference type="PaxDb" id="9986-ENSOCUP00000005709"/>
<dbReference type="Ensembl" id="ENSOCUT00000006605.2">
    <property type="protein sequence ID" value="ENSOCUP00000005709.2"/>
    <property type="gene ID" value="ENSOCUG00000006607.2"/>
</dbReference>
<dbReference type="GeneID" id="100009302"/>
<dbReference type="KEGG" id="ocu:100009302"/>
<dbReference type="CTD" id="3094"/>
<dbReference type="eggNOG" id="KOG3275">
    <property type="taxonomic scope" value="Eukaryota"/>
</dbReference>
<dbReference type="GeneTree" id="ENSGT00940000154451"/>
<dbReference type="HOGENOM" id="CLU_056776_8_1_1"/>
<dbReference type="InParanoid" id="P80912"/>
<dbReference type="OMA" id="LAFMDVM"/>
<dbReference type="OrthoDB" id="672793at2759"/>
<dbReference type="TreeFam" id="TF314862"/>
<dbReference type="EvolutionaryTrace" id="P80912"/>
<dbReference type="Proteomes" id="UP000001811">
    <property type="component" value="Chromosome 3"/>
</dbReference>
<dbReference type="Bgee" id="ENSOCUG00000006607">
    <property type="expression patterns" value="Expressed in kidney and 18 other cell types or tissues"/>
</dbReference>
<dbReference type="GO" id="GO:0005737">
    <property type="term" value="C:cytoplasm"/>
    <property type="evidence" value="ECO:0000250"/>
    <property type="project" value="UniProtKB"/>
</dbReference>
<dbReference type="GO" id="GO:0000118">
    <property type="term" value="C:histone deacetylase complex"/>
    <property type="evidence" value="ECO:0000250"/>
    <property type="project" value="UniProtKB"/>
</dbReference>
<dbReference type="GO" id="GO:0005634">
    <property type="term" value="C:nucleus"/>
    <property type="evidence" value="ECO:0000250"/>
    <property type="project" value="UniProtKB"/>
</dbReference>
<dbReference type="GO" id="GO:0043530">
    <property type="term" value="F:adenosine 5'-monophosphoramidase activity"/>
    <property type="evidence" value="ECO:0007669"/>
    <property type="project" value="RHEA"/>
</dbReference>
<dbReference type="GO" id="GO:0016929">
    <property type="term" value="F:deSUMOylase activity"/>
    <property type="evidence" value="ECO:0000250"/>
    <property type="project" value="UniProtKB"/>
</dbReference>
<dbReference type="GO" id="GO:0016787">
    <property type="term" value="F:hydrolase activity"/>
    <property type="evidence" value="ECO:0000250"/>
    <property type="project" value="UniProtKB"/>
</dbReference>
<dbReference type="GO" id="GO:0000166">
    <property type="term" value="F:nucleotide binding"/>
    <property type="evidence" value="ECO:0007669"/>
    <property type="project" value="UniProtKB-KW"/>
</dbReference>
<dbReference type="GO" id="GO:0072332">
    <property type="term" value="P:intrinsic apoptotic signaling pathway by p53 class mediator"/>
    <property type="evidence" value="ECO:0000250"/>
    <property type="project" value="UniProtKB"/>
</dbReference>
<dbReference type="GO" id="GO:0016926">
    <property type="term" value="P:protein desumoylation"/>
    <property type="evidence" value="ECO:0000250"/>
    <property type="project" value="UniProtKB"/>
</dbReference>
<dbReference type="GO" id="GO:0006508">
    <property type="term" value="P:proteolysis"/>
    <property type="evidence" value="ECO:0007669"/>
    <property type="project" value="UniProtKB-KW"/>
</dbReference>
<dbReference type="GO" id="GO:0009154">
    <property type="term" value="P:purine ribonucleotide catabolic process"/>
    <property type="evidence" value="ECO:0000250"/>
    <property type="project" value="UniProtKB"/>
</dbReference>
<dbReference type="GO" id="GO:0006355">
    <property type="term" value="P:regulation of DNA-templated transcription"/>
    <property type="evidence" value="ECO:0000250"/>
    <property type="project" value="UniProtKB"/>
</dbReference>
<dbReference type="CDD" id="cd01276">
    <property type="entry name" value="PKCI_related"/>
    <property type="match status" value="1"/>
</dbReference>
<dbReference type="FunFam" id="3.30.428.10:FF:000005">
    <property type="entry name" value="Histidine triad nucleotide-binding protein 1"/>
    <property type="match status" value="1"/>
</dbReference>
<dbReference type="Gene3D" id="3.30.428.10">
    <property type="entry name" value="HIT-like"/>
    <property type="match status" value="1"/>
</dbReference>
<dbReference type="InterPro" id="IPR019808">
    <property type="entry name" value="Histidine_triad_CS"/>
</dbReference>
<dbReference type="InterPro" id="IPR001310">
    <property type="entry name" value="Histidine_triad_HIT"/>
</dbReference>
<dbReference type="InterPro" id="IPR011146">
    <property type="entry name" value="HIT-like"/>
</dbReference>
<dbReference type="InterPro" id="IPR036265">
    <property type="entry name" value="HIT-like_sf"/>
</dbReference>
<dbReference type="PANTHER" id="PTHR23089">
    <property type="entry name" value="HISTIDINE TRIAD HIT PROTEIN"/>
    <property type="match status" value="1"/>
</dbReference>
<dbReference type="Pfam" id="PF01230">
    <property type="entry name" value="HIT"/>
    <property type="match status" value="1"/>
</dbReference>
<dbReference type="PRINTS" id="PR00332">
    <property type="entry name" value="HISTRIAD"/>
</dbReference>
<dbReference type="SUPFAM" id="SSF54197">
    <property type="entry name" value="HIT-like"/>
    <property type="match status" value="1"/>
</dbReference>
<dbReference type="PROSITE" id="PS00892">
    <property type="entry name" value="HIT_1"/>
    <property type="match status" value="1"/>
</dbReference>
<dbReference type="PROSITE" id="PS51084">
    <property type="entry name" value="HIT_2"/>
    <property type="match status" value="1"/>
</dbReference>
<proteinExistence type="evidence at protein level"/>
<feature type="initiator methionine" description="Removed" evidence="2">
    <location>
        <position position="1"/>
    </location>
</feature>
<feature type="chain" id="PRO_0000109783" description="Adenosine 5'-monophosphoramidase HINT1">
    <location>
        <begin position="2"/>
        <end position="126"/>
    </location>
</feature>
<feature type="domain" description="HIT" evidence="4">
    <location>
        <begin position="18"/>
        <end position="126"/>
    </location>
</feature>
<feature type="short sequence motif" description="Histidine triad motif">
    <location>
        <begin position="110"/>
        <end position="114"/>
    </location>
</feature>
<feature type="active site" description="Tele-AMP-histidine intermediate" evidence="1">
    <location>
        <position position="112"/>
    </location>
</feature>
<feature type="binding site" evidence="1">
    <location>
        <begin position="43"/>
        <end position="44"/>
    </location>
    <ligand>
        <name>AMP</name>
        <dbReference type="ChEBI" id="CHEBI:456215"/>
    </ligand>
</feature>
<feature type="binding site" evidence="1">
    <location>
        <position position="99"/>
    </location>
    <ligand>
        <name>AMP</name>
        <dbReference type="ChEBI" id="CHEBI:456215"/>
    </ligand>
</feature>
<feature type="binding site" evidence="1">
    <location>
        <begin position="105"/>
        <end position="107"/>
    </location>
    <ligand>
        <name>AMP</name>
        <dbReference type="ChEBI" id="CHEBI:456215"/>
    </ligand>
</feature>
<feature type="binding site" evidence="1">
    <location>
        <begin position="112"/>
        <end position="114"/>
    </location>
    <ligand>
        <name>AMP</name>
        <dbReference type="ChEBI" id="CHEBI:456215"/>
    </ligand>
</feature>
<feature type="modified residue" description="N-acetylalanine" evidence="2">
    <location>
        <position position="2"/>
    </location>
</feature>
<feature type="modified residue" description="N6-acetyllysine" evidence="1">
    <location>
        <position position="21"/>
    </location>
</feature>
<feature type="modified residue" description="N6-acetyllysine" evidence="1">
    <location>
        <position position="30"/>
    </location>
</feature>
<feature type="modified residue" description="Phosphoserine" evidence="3">
    <location>
        <position position="45"/>
    </location>
</feature>
<feature type="modified residue" description="Phosphoserine" evidence="3">
    <location>
        <position position="72"/>
    </location>
</feature>
<feature type="mutagenesis site" description="No effect on its ability to convert adenosine 5'-O-phosphorothioate into 5'-O-monophosphate." evidence="7">
    <original>C</original>
    <variation>A</variation>
    <location>
        <position position="38"/>
    </location>
</feature>
<feature type="mutagenesis site" description="No effect on its ability to convert adenosine 5'-O-phosphorothioate into 5'-O-monophosphate." evidence="7">
    <original>C</original>
    <variation>A</variation>
    <location>
        <position position="84"/>
    </location>
</feature>
<feature type="mutagenesis site" description="No effect on its ability to convert adenosine 5'-O-phosphorothioate into 5'-O-monophosphate." evidence="7">
    <original>S</original>
    <variation>A</variation>
    <location>
        <position position="107"/>
    </location>
</feature>
<feature type="mutagenesis site" description="Nearly abolishes its ability to convert adenosine 5'-O-phosphorothioate into 5'-O-monophosphate." evidence="7">
    <original>H</original>
    <variation>D</variation>
    <location>
        <position position="114"/>
    </location>
</feature>
<feature type="helix" evidence="10">
    <location>
        <begin position="18"/>
        <end position="23"/>
    </location>
</feature>
<feature type="strand" evidence="10">
    <location>
        <begin position="31"/>
        <end position="34"/>
    </location>
</feature>
<feature type="strand" evidence="10">
    <location>
        <begin position="36"/>
        <end position="42"/>
    </location>
</feature>
<feature type="strand" evidence="10">
    <location>
        <begin position="47"/>
        <end position="58"/>
    </location>
</feature>
<feature type="helix" evidence="10">
    <location>
        <begin position="63"/>
        <end position="65"/>
    </location>
</feature>
<feature type="helix" evidence="10">
    <location>
        <begin position="68"/>
        <end position="70"/>
    </location>
</feature>
<feature type="helix" evidence="10">
    <location>
        <begin position="71"/>
        <end position="87"/>
    </location>
</feature>
<feature type="strand" evidence="10">
    <location>
        <begin position="94"/>
        <end position="97"/>
    </location>
</feature>
<feature type="helix" evidence="10">
    <location>
        <begin position="101"/>
        <end position="104"/>
    </location>
</feature>
<feature type="strand" evidence="10">
    <location>
        <begin position="108"/>
        <end position="110"/>
    </location>
</feature>
<feature type="strand" evidence="10">
    <location>
        <begin position="113"/>
        <end position="119"/>
    </location>
</feature>
<evidence type="ECO:0000250" key="1">
    <source>
        <dbReference type="UniProtKB" id="P49773"/>
    </source>
</evidence>
<evidence type="ECO:0000250" key="2">
    <source>
        <dbReference type="UniProtKB" id="P62958"/>
    </source>
</evidence>
<evidence type="ECO:0000250" key="3">
    <source>
        <dbReference type="UniProtKB" id="P70349"/>
    </source>
</evidence>
<evidence type="ECO:0000255" key="4">
    <source>
        <dbReference type="PROSITE-ProRule" id="PRU00464"/>
    </source>
</evidence>
<evidence type="ECO:0000269" key="5">
    <source>
    </source>
</evidence>
<evidence type="ECO:0000269" key="6">
    <source>
    </source>
</evidence>
<evidence type="ECO:0000269" key="7">
    <source>
    </source>
</evidence>
<evidence type="ECO:0000305" key="8"/>
<evidence type="ECO:0000305" key="9">
    <source>
    </source>
</evidence>
<evidence type="ECO:0007829" key="10">
    <source>
        <dbReference type="PDB" id="3O1C"/>
    </source>
</evidence>
<comment type="function">
    <text evidence="1 3 5 6 7">Exhibits adenosine 5'-monophosphoramidase activity, hydrolyzing purine nucleotide phosphoramidates with a single phosphate group such as adenosine 5'monophosphoramidate (AMP-NH2) to yield AMP and NH2 (PubMed:11805111, PubMed:15703176). Hydrolyzes adenosine 5'monophosphomorpholidate (AMP-morpholidate) and guanosine 5'monophosphomorpholidate (GMP-morpholidate) (PubMed:15703176). Hydrolyzes lysyl-AMP (AMP-N-epsilon-(N-alpha-acetyl lysine methyl ester)) generated by lysine tRNA ligase (PubMed:20940308). Hydrolyzes Met-AMP, His-AMP, Asp-AMP, lysyl-GMP (GMP-N-epsilon-(N-alpha-acetyl lysine methyl ester)) and AMP-N-alanine methyl ester (By similarity). Can also convert adenosine 5'-O-phosphorothioate and guanosine 5'-O-phosphorothioate to the corresponding nucleoside 5'-O-phosphates with concomitant release of hydrogen sulfide (PubMed:20940308). In addition, functions as a scaffolding protein that modulates transcriptional activation by the LEF1/TCF1-CTNNB1 complex and by the complex formed with MITF and CTNNB1 (By similarity). Modulates p53/TP53 levels and p53/TP53-mediated apoptosis. Modulates proteasomal degradation of target proteins by the SCF (SKP2-CUL1-F-box protein) E3 ubiquitin-protein ligase complex (By similarity). Also exhibits SUMO-specific isopeptidase activity, deconjugating SUMO1 from RANGAP1 and RGS17 (By similarity).</text>
</comment>
<comment type="catalytic activity">
    <reaction evidence="1">
        <text>adenosine 5'-phosphoramidate + H2O = AMP + NH4(+)</text>
        <dbReference type="Rhea" id="RHEA:67916"/>
        <dbReference type="ChEBI" id="CHEBI:15377"/>
        <dbReference type="ChEBI" id="CHEBI:28938"/>
        <dbReference type="ChEBI" id="CHEBI:57890"/>
        <dbReference type="ChEBI" id="CHEBI:456215"/>
    </reaction>
</comment>
<comment type="subunit">
    <text evidence="1 3">Homodimer (By similarity). Interacts with CDK7 (By similarity). Interacts with RUVBL1 and RUVBL2 and is associated with the LEF1/TCF1-CTNNB1 complex and with a KAT5 histone acetyltransferase complex (By similarity). Identified in a complex with MITF and CTNNB1 (By similarity). Interacts with CDC34 and RBX1, and is part of a SCF (SKP2-CUL1-F-box protein) E3 ubiquitin-protein ligase complex (By similarity). Interacts with SUMO1, SUMO2 and RGS17 (By similarity). Interacts with the Ten-1 ICD form of TENM1 (By similarity). Interacts with CALM1; interaction increases in the presence of calcium ions (By similarity).</text>
</comment>
<comment type="subcellular location">
    <subcellularLocation>
        <location evidence="1">Cytoplasm</location>
    </subcellularLocation>
    <subcellularLocation>
        <location evidence="1">Nucleus</location>
    </subcellularLocation>
</comment>
<comment type="tissue specificity">
    <text>Widely expressed.</text>
</comment>
<comment type="similarity">
    <text evidence="8">Belongs to the HINT family.</text>
</comment>
<comment type="caution">
    <text evidence="8">Was originally thought to be a protein kinase C inhibitor and to bind zinc in solution. Both seem to be incorrect.</text>
</comment>
<reference key="1">
    <citation type="journal article" date="1997" name="Biochem. J.">
        <title>Isolation, cloning and characterization of a low-molecular-mass purine nucleoside- and nucleotide-binding protein.</title>
        <authorList>
            <person name="Gilmour J."/>
            <person name="Liang N."/>
            <person name="Lowenstein J.M."/>
        </authorList>
    </citation>
    <scope>NUCLEOTIDE SEQUENCE [MRNA]</scope>
    <source>
        <tissue>Heart</tissue>
    </source>
</reference>
<reference key="2">
    <citation type="journal article" date="2002" name="J. Biol. Chem.">
        <title>Adenosine monophosphoramidase activity of Hint and Hnt1 supports function of Kin28, Ccl1, and Tfb3.</title>
        <authorList>
            <person name="Bieganowski P."/>
            <person name="Garrison P.N."/>
            <person name="Hodawadekar S.C."/>
            <person name="Faye G."/>
            <person name="Barnes L.D."/>
            <person name="Brenner C."/>
        </authorList>
    </citation>
    <scope>FUNCTION</scope>
    <scope>CATALYTIC ACTIVITY</scope>
</reference>
<reference key="3">
    <citation type="journal article" date="2005" name="J. Biol. Chem.">
        <title>31P NMR and genetic analysis establish hinT as the only Escherchia coli purine nucleoside phosphoramidase and as essential for growth under high salt conditions.</title>
        <authorList>
            <person name="Chou T.F."/>
            <person name="Bieganowski P."/>
            <person name="Shilinski K."/>
            <person name="Cheng J."/>
            <person name="Brenner C."/>
            <person name="Wagner C.R."/>
        </authorList>
    </citation>
    <scope>CATALYTIC ACTIVITY</scope>
    <scope>FUNCTION</scope>
</reference>
<reference key="4">
    <citation type="journal article" date="1997" name="Nat. Struct. Biol.">
        <title>Crystal structures of HINT demonstrate that histidine triad proteins are GalT-related nucleotide-binding proteins.</title>
        <authorList>
            <person name="Brenner C."/>
            <person name="Garrison P."/>
            <person name="Gilmour J."/>
            <person name="Peisach D."/>
            <person name="Ringe D."/>
            <person name="Petsko G.A."/>
            <person name="Lowenstein J.M."/>
        </authorList>
    </citation>
    <scope>X-RAY CRYSTALLOGRAPHY (1.9 ANGSTROMS) OF 12-126 IN COMPLEXES WITH 8-BROMO-ADENOSINE-5'-MONOPHOSPHATE AND GUANOSINE-5'-MONOPHOSPHATE</scope>
</reference>
<reference key="5">
    <citation type="journal article" date="2004" name="J. Biol. Chem.">
        <title>Biochemical, crystallographic, and mutagenic characterization of hint, the AMP-lysine hydrolase, with novel substrates and inhibitors.</title>
        <authorList>
            <person name="Krakowiak A."/>
            <person name="Pace H.C."/>
            <person name="Blackburn G.M."/>
            <person name="Adams M."/>
            <person name="Mekhalfia A."/>
            <person name="Kaczmarek R."/>
            <person name="Baraniak J."/>
            <person name="Stec W.J."/>
            <person name="Brenner C."/>
        </authorList>
    </citation>
    <scope>X-RAY CRYSTALLOGRAPHY (1.80 ANGSTROMS) OF 2-125 IN COMPLEX WITH 5'-O-(N-ETHYL-SULFAMOYL)ADENOSINE</scope>
    <scope>SUBUNIT</scope>
</reference>
<reference key="6">
    <citation type="journal article" date="2010" name="J. Biol. Chem.">
        <title>Histidine triad nucleotide-binding protein 1 (HINT-1) phosphoramidase transforms nucleoside 5'-O-phosphorothioates to nucleoside 5'-O-phosphates.</title>
        <authorList>
            <person name="Ozga M."/>
            <person name="Dolot R."/>
            <person name="Janicka M."/>
            <person name="Kaczmarek R."/>
            <person name="Krakowiak A."/>
        </authorList>
    </citation>
    <scope>X-RAY CRYSTALLOGRAPHY (1.08 ANGSTROMS) IN COMPLEX WITH ADENOSINE 5'-O-PHOSPHOROTHIOATE</scope>
    <scope>FUNCTION</scope>
    <scope>SUBUNIT</scope>
    <scope>MUTAGENESIS OF CYS-38; CYS-84; SER-107 AND HIS-114</scope>
</reference>
<reference key="7">
    <citation type="journal article" date="2011" name="Acta Crystallogr. D">
        <title>High-resolution X-ray structure of the rabbit histidine triad nucleotide-binding protein 1 (rHINT1)-adenosine complex at 1.10 A resolution.</title>
        <authorList>
            <person name="Dolot R."/>
            <person name="Ozga M."/>
            <person name="Krakowiak A."/>
            <person name="Nawrot B."/>
        </authorList>
    </citation>
    <scope>X-RAY CRYSTALLOGRAPHY (1.10 ANGSTROMS) IN COMPLEX WITH ADENOSINE</scope>
    <scope>SUBUNIT</scope>
</reference>
<accession>P80912</accession>
<organism>
    <name type="scientific">Oryctolagus cuniculus</name>
    <name type="common">Rabbit</name>
    <dbReference type="NCBI Taxonomy" id="9986"/>
    <lineage>
        <taxon>Eukaryota</taxon>
        <taxon>Metazoa</taxon>
        <taxon>Chordata</taxon>
        <taxon>Craniata</taxon>
        <taxon>Vertebrata</taxon>
        <taxon>Euteleostomi</taxon>
        <taxon>Mammalia</taxon>
        <taxon>Eutheria</taxon>
        <taxon>Euarchontoglires</taxon>
        <taxon>Glires</taxon>
        <taxon>Lagomorpha</taxon>
        <taxon>Leporidae</taxon>
        <taxon>Oryctolagus</taxon>
    </lineage>
</organism>
<name>HINT1_RABIT</name>
<keyword id="KW-0002">3D-structure</keyword>
<keyword id="KW-0007">Acetylation</keyword>
<keyword id="KW-0053">Apoptosis</keyword>
<keyword id="KW-0963">Cytoplasm</keyword>
<keyword id="KW-0378">Hydrolase</keyword>
<keyword id="KW-0547">Nucleotide-binding</keyword>
<keyword id="KW-0539">Nucleus</keyword>
<keyword id="KW-0597">Phosphoprotein</keyword>
<keyword id="KW-0645">Protease</keyword>
<keyword id="KW-1185">Reference proteome</keyword>
<keyword id="KW-0788">Thiol protease</keyword>
<keyword id="KW-0804">Transcription</keyword>
<keyword id="KW-0805">Transcription regulation</keyword>
<keyword id="KW-0833">Ubl conjugation pathway</keyword>